<comment type="function">
    <text evidence="1">Involved in the biosynthesis of the core oligosaccharide region of lipopolysaccharide (LPS) (By similarity). Required for the addition of 3-deoxy-D-manno-oct-2-ulosonic acid III (KdoIII) to the KdoII residue of the inner lipopolysaccharide core (By similarity).</text>
</comment>
<comment type="catalytic activity">
    <reaction evidence="1">
        <text>an alpha-Kdo-(2-&gt;4)-alpha-Kdo-(2-&gt;6)-lipid IVA + CMP-3-deoxy-beta-D-manno-octulosonate = an alpha-Kdo-(2-&gt;4)-alpha-Kdo-(2-&gt;4)-alpha-Kdo-(2-&gt;6)-lipid IVA + CMP + H(+)</text>
        <dbReference type="Rhea" id="RHEA:73831"/>
        <dbReference type="ChEBI" id="CHEBI:15378"/>
        <dbReference type="ChEBI" id="CHEBI:60377"/>
        <dbReference type="ChEBI" id="CHEBI:85987"/>
        <dbReference type="ChEBI" id="CHEBI:176429"/>
        <dbReference type="ChEBI" id="CHEBI:193025"/>
        <dbReference type="EC" id="2.4.99.15"/>
    </reaction>
</comment>
<comment type="pathway">
    <text evidence="1">Bacterial outer membrane biogenesis; LPS core biosynthesis.</text>
</comment>
<comment type="subcellular location">
    <subcellularLocation>
        <location evidence="1">Cytoplasm</location>
    </subcellularLocation>
</comment>
<organism>
    <name type="scientific">Salmonella typhimurium (strain LT2 / SGSC1412 / ATCC 700720)</name>
    <dbReference type="NCBI Taxonomy" id="99287"/>
    <lineage>
        <taxon>Bacteria</taxon>
        <taxon>Pseudomonadati</taxon>
        <taxon>Pseudomonadota</taxon>
        <taxon>Gammaproteobacteria</taxon>
        <taxon>Enterobacterales</taxon>
        <taxon>Enterobacteriaceae</taxon>
        <taxon>Salmonella</taxon>
    </lineage>
</organism>
<keyword id="KW-0963">Cytoplasm</keyword>
<keyword id="KW-0448">Lipopolysaccharide biosynthesis</keyword>
<keyword id="KW-1185">Reference proteome</keyword>
<keyword id="KW-0808">Transferase</keyword>
<accession>P26473</accession>
<evidence type="ECO:0000250" key="1">
    <source>
        <dbReference type="UniProtKB" id="P27241"/>
    </source>
</evidence>
<evidence type="ECO:0000303" key="2">
    <source>
    </source>
</evidence>
<proteinExistence type="inferred from homology"/>
<feature type="chain" id="PRO_0000097291" description="Probable 3-deoxy-manno-octulosonic acid transferase">
    <location>
        <begin position="1"/>
        <end position="269"/>
    </location>
</feature>
<gene>
    <name evidence="1" type="primary">waaZ</name>
    <name evidence="2" type="synonym">rfaZ</name>
    <name type="ordered locus">STM3715</name>
</gene>
<sequence length="269" mass="31003">MGSVNFITHADVLQLIAKRTAEDCIIFLSGPTSRKTPLSLLRMKDVIAVNGSVQYLLNNNVKPFLYLLTDIRFLHRRREDFYNFSRNSQFTIVNLDVYEQASVDDQKYIEENCLIIRSFYRREKGGFLKKIKFNILKRVHKALLISVPLSKRGRLAGFCKDISIGYCSCHTIAYTAIQVAYSLKYGRIICSGLDLTGSCPRFYDESTSPMPSELSKDLFKILPFFTFMRKNVSDLNIFNLSDDTAIHYDIIPYITASELEDEIYYDKIV</sequence>
<protein>
    <recommendedName>
        <fullName evidence="1">Probable 3-deoxy-manno-octulosonic acid transferase</fullName>
        <shortName evidence="1">Kdo transferase</shortName>
        <ecNumber evidence="1">2.4.99.15</ecNumber>
    </recommendedName>
    <alternativeName>
        <fullName evidence="1">Lipopolysaccharide core biosynthesis protein WaaZ</fullName>
    </alternativeName>
</protein>
<reference key="1">
    <citation type="journal article" date="1991" name="J. Bacteriol.">
        <title>Cloning, characterization, and DNA sequence of the rfaLK region for lipopolysaccharide synthesis in Salmonella typhimurium LT2.</title>
        <authorList>
            <person name="Maclachlan P.R."/>
            <person name="Kadam S.K."/>
            <person name="Sanderson K.E."/>
        </authorList>
    </citation>
    <scope>NUCLEOTIDE SEQUENCE [GENOMIC DNA]</scope>
    <source>
        <strain>LT2</strain>
    </source>
</reference>
<reference key="2">
    <citation type="journal article" date="2001" name="Nature">
        <title>Complete genome sequence of Salmonella enterica serovar Typhimurium LT2.</title>
        <authorList>
            <person name="McClelland M."/>
            <person name="Sanderson K.E."/>
            <person name="Spieth J."/>
            <person name="Clifton S.W."/>
            <person name="Latreille P."/>
            <person name="Courtney L."/>
            <person name="Porwollik S."/>
            <person name="Ali J."/>
            <person name="Dante M."/>
            <person name="Du F."/>
            <person name="Hou S."/>
            <person name="Layman D."/>
            <person name="Leonard S."/>
            <person name="Nguyen C."/>
            <person name="Scott K."/>
            <person name="Holmes A."/>
            <person name="Grewal N."/>
            <person name="Mulvaney E."/>
            <person name="Ryan E."/>
            <person name="Sun H."/>
            <person name="Florea L."/>
            <person name="Miller W."/>
            <person name="Stoneking T."/>
            <person name="Nhan M."/>
            <person name="Waterston R."/>
            <person name="Wilson R.K."/>
        </authorList>
    </citation>
    <scope>NUCLEOTIDE SEQUENCE [LARGE SCALE GENOMIC DNA]</scope>
    <source>
        <strain>LT2 / SGSC1412 / ATCC 700720</strain>
    </source>
</reference>
<dbReference type="EC" id="2.4.99.15" evidence="1"/>
<dbReference type="EMBL" id="M73826">
    <property type="protein sequence ID" value="AAA27208.1"/>
    <property type="molecule type" value="Genomic_DNA"/>
</dbReference>
<dbReference type="EMBL" id="AE006468">
    <property type="protein sequence ID" value="AAL22574.1"/>
    <property type="molecule type" value="Genomic_DNA"/>
</dbReference>
<dbReference type="PIR" id="D41317">
    <property type="entry name" value="D41317"/>
</dbReference>
<dbReference type="RefSeq" id="NP_462615.1">
    <property type="nucleotide sequence ID" value="NC_003197.2"/>
</dbReference>
<dbReference type="RefSeq" id="WP_000536012.1">
    <property type="nucleotide sequence ID" value="NC_003197.2"/>
</dbReference>
<dbReference type="STRING" id="99287.STM3715"/>
<dbReference type="CAZy" id="GT73">
    <property type="family name" value="Glycosyltransferase Family 73"/>
</dbReference>
<dbReference type="PaxDb" id="99287-STM3715"/>
<dbReference type="DNASU" id="1255239"/>
<dbReference type="GeneID" id="1255239"/>
<dbReference type="KEGG" id="stm:STM3715"/>
<dbReference type="PATRIC" id="fig|99287.12.peg.3929"/>
<dbReference type="HOGENOM" id="CLU_090332_0_0_6"/>
<dbReference type="OMA" id="KPFFYVC"/>
<dbReference type="PhylomeDB" id="P26473"/>
<dbReference type="BioCyc" id="SENT99287:STM3715-MONOMER"/>
<dbReference type="UniPathway" id="UPA00958"/>
<dbReference type="Proteomes" id="UP000001014">
    <property type="component" value="Chromosome"/>
</dbReference>
<dbReference type="GO" id="GO:0005737">
    <property type="term" value="C:cytoplasm"/>
    <property type="evidence" value="ECO:0007669"/>
    <property type="project" value="UniProtKB-SubCell"/>
</dbReference>
<dbReference type="GO" id="GO:0016740">
    <property type="term" value="F:transferase activity"/>
    <property type="evidence" value="ECO:0007669"/>
    <property type="project" value="UniProtKB-KW"/>
</dbReference>
<dbReference type="GO" id="GO:0009244">
    <property type="term" value="P:lipopolysaccharide core region biosynthetic process"/>
    <property type="evidence" value="ECO:0007669"/>
    <property type="project" value="UniProtKB-UniPathway"/>
</dbReference>
<dbReference type="Gene3D" id="3.90.1480.10">
    <property type="entry name" value="Alpha-2,3-sialyltransferase"/>
    <property type="match status" value="1"/>
</dbReference>
<dbReference type="InterPro" id="IPR031026">
    <property type="entry name" value="WaaZ_KDO_III"/>
</dbReference>
<dbReference type="NCBIfam" id="NF007333">
    <property type="entry name" value="PRK09822.1"/>
    <property type="match status" value="1"/>
</dbReference>
<dbReference type="NCBIfam" id="TIGR04437">
    <property type="entry name" value="WaaZ_KDO_III"/>
    <property type="match status" value="1"/>
</dbReference>
<name>WAAZ_SALTY</name>